<protein>
    <recommendedName>
        <fullName evidence="1">Sec-independent protein translocase protein TatB</fullName>
    </recommendedName>
</protein>
<feature type="chain" id="PRO_0000192660" description="Sec-independent protein translocase protein TatB">
    <location>
        <begin position="1"/>
        <end position="131"/>
    </location>
</feature>
<feature type="transmembrane region" description="Helical" evidence="1">
    <location>
        <begin position="2"/>
        <end position="22"/>
    </location>
</feature>
<feature type="region of interest" description="Disordered" evidence="2">
    <location>
        <begin position="90"/>
        <end position="131"/>
    </location>
</feature>
<feature type="compositionally biased region" description="Basic and acidic residues" evidence="2">
    <location>
        <begin position="96"/>
        <end position="106"/>
    </location>
</feature>
<name>TATB_MYCBO</name>
<evidence type="ECO:0000255" key="1">
    <source>
        <dbReference type="HAMAP-Rule" id="MF_00237"/>
    </source>
</evidence>
<evidence type="ECO:0000256" key="2">
    <source>
        <dbReference type="SAM" id="MobiDB-lite"/>
    </source>
</evidence>
<organism>
    <name type="scientific">Mycobacterium bovis (strain ATCC BAA-935 / AF2122/97)</name>
    <dbReference type="NCBI Taxonomy" id="233413"/>
    <lineage>
        <taxon>Bacteria</taxon>
        <taxon>Bacillati</taxon>
        <taxon>Actinomycetota</taxon>
        <taxon>Actinomycetes</taxon>
        <taxon>Mycobacteriales</taxon>
        <taxon>Mycobacteriaceae</taxon>
        <taxon>Mycobacterium</taxon>
        <taxon>Mycobacterium tuberculosis complex</taxon>
    </lineage>
</organism>
<proteinExistence type="inferred from homology"/>
<sequence length="131" mass="13985">MFANIGWGEMLVLVMVGLVVLGPERLPGAIRWAASALRQARDYLSGVTSQLREDIGPEFDDLRGHLGELQKLRGMTPRAALTKHLLDGDDSLFTGDFDRPTPKKPDAAGSAGPDATEQIGAGPIPFDSDAT</sequence>
<accession>Q7VEZ5</accession>
<accession>A0A1R3XXQ3</accession>
<accession>X2BHF1</accession>
<comment type="function">
    <text evidence="1">Part of the twin-arginine translocation (Tat) system that transports large folded proteins containing a characteristic twin-arginine motif in their signal peptide across membranes. Together with TatC, TatB is part of a receptor directly interacting with Tat signal peptides. TatB may form an oligomeric binding site that transiently accommodates folded Tat precursor proteins before their translocation.</text>
</comment>
<comment type="subunit">
    <text evidence="1">The Tat system comprises two distinct complexes: a TatABC complex, containing multiple copies of TatA, TatB and TatC subunits, and a separate TatA complex, containing only TatA subunits. Substrates initially bind to the TatABC complex, which probably triggers association of the separate TatA complex to form the active translocon.</text>
</comment>
<comment type="subcellular location">
    <subcellularLocation>
        <location evidence="1">Cell membrane</location>
        <topology evidence="1">Single-pass membrane protein</topology>
    </subcellularLocation>
</comment>
<comment type="similarity">
    <text evidence="1">Belongs to the TatB family.</text>
</comment>
<keyword id="KW-1003">Cell membrane</keyword>
<keyword id="KW-0472">Membrane</keyword>
<keyword id="KW-0653">Protein transport</keyword>
<keyword id="KW-1185">Reference proteome</keyword>
<keyword id="KW-0811">Translocation</keyword>
<keyword id="KW-0812">Transmembrane</keyword>
<keyword id="KW-1133">Transmembrane helix</keyword>
<keyword id="KW-0813">Transport</keyword>
<dbReference type="EMBL" id="LT708304">
    <property type="protein sequence ID" value="SIT99857.1"/>
    <property type="molecule type" value="Genomic_DNA"/>
</dbReference>
<dbReference type="RefSeq" id="NP_854910.1">
    <property type="nucleotide sequence ID" value="NC_002945.3"/>
</dbReference>
<dbReference type="RefSeq" id="WP_003406260.1">
    <property type="nucleotide sequence ID" value="NC_002945.4"/>
</dbReference>
<dbReference type="SMR" id="Q7VEZ5"/>
<dbReference type="GeneID" id="45425194"/>
<dbReference type="KEGG" id="mbo:BQ2027_MB1256"/>
<dbReference type="PATRIC" id="fig|233413.5.peg.1378"/>
<dbReference type="Proteomes" id="UP000001419">
    <property type="component" value="Chromosome"/>
</dbReference>
<dbReference type="GO" id="GO:0033281">
    <property type="term" value="C:TAT protein transport complex"/>
    <property type="evidence" value="ECO:0007669"/>
    <property type="project" value="UniProtKB-UniRule"/>
</dbReference>
<dbReference type="GO" id="GO:0008320">
    <property type="term" value="F:protein transmembrane transporter activity"/>
    <property type="evidence" value="ECO:0007669"/>
    <property type="project" value="UniProtKB-UniRule"/>
</dbReference>
<dbReference type="GO" id="GO:0043953">
    <property type="term" value="P:protein transport by the Tat complex"/>
    <property type="evidence" value="ECO:0007669"/>
    <property type="project" value="UniProtKB-UniRule"/>
</dbReference>
<dbReference type="Gene3D" id="1.20.5.3310">
    <property type="match status" value="1"/>
</dbReference>
<dbReference type="HAMAP" id="MF_00237">
    <property type="entry name" value="TatB"/>
    <property type="match status" value="1"/>
</dbReference>
<dbReference type="InterPro" id="IPR003369">
    <property type="entry name" value="TatA/B/E"/>
</dbReference>
<dbReference type="InterPro" id="IPR018448">
    <property type="entry name" value="TatB"/>
</dbReference>
<dbReference type="NCBIfam" id="TIGR01410">
    <property type="entry name" value="tatB"/>
    <property type="match status" value="1"/>
</dbReference>
<dbReference type="Pfam" id="PF02416">
    <property type="entry name" value="TatA_B_E"/>
    <property type="match status" value="1"/>
</dbReference>
<dbReference type="PRINTS" id="PR01506">
    <property type="entry name" value="TATBPROTEIN"/>
</dbReference>
<gene>
    <name evidence="1" type="primary">tatB</name>
    <name type="ordered locus">BQ2027_MB1256</name>
</gene>
<reference key="1">
    <citation type="journal article" date="2003" name="Proc. Natl. Acad. Sci. U.S.A.">
        <title>The complete genome sequence of Mycobacterium bovis.</title>
        <authorList>
            <person name="Garnier T."/>
            <person name="Eiglmeier K."/>
            <person name="Camus J.-C."/>
            <person name="Medina N."/>
            <person name="Mansoor H."/>
            <person name="Pryor M."/>
            <person name="Duthoy S."/>
            <person name="Grondin S."/>
            <person name="Lacroix C."/>
            <person name="Monsempe C."/>
            <person name="Simon S."/>
            <person name="Harris B."/>
            <person name="Atkin R."/>
            <person name="Doggett J."/>
            <person name="Mayes R."/>
            <person name="Keating L."/>
            <person name="Wheeler P.R."/>
            <person name="Parkhill J."/>
            <person name="Barrell B.G."/>
            <person name="Cole S.T."/>
            <person name="Gordon S.V."/>
            <person name="Hewinson R.G."/>
        </authorList>
    </citation>
    <scope>NUCLEOTIDE SEQUENCE [LARGE SCALE GENOMIC DNA]</scope>
    <source>
        <strain>ATCC BAA-935 / AF2122/97</strain>
    </source>
</reference>
<reference key="2">
    <citation type="journal article" date="2017" name="Genome Announc.">
        <title>Updated reference genome sequence and annotation of Mycobacterium bovis AF2122/97.</title>
        <authorList>
            <person name="Malone K.M."/>
            <person name="Farrell D."/>
            <person name="Stuber T.P."/>
            <person name="Schubert O.T."/>
            <person name="Aebersold R."/>
            <person name="Robbe-Austerman S."/>
            <person name="Gordon S.V."/>
        </authorList>
    </citation>
    <scope>NUCLEOTIDE SEQUENCE [LARGE SCALE GENOMIC DNA]</scope>
    <scope>GENOME REANNOTATION</scope>
    <source>
        <strain>ATCC BAA-935 / AF2122/97</strain>
    </source>
</reference>